<protein>
    <recommendedName>
        <fullName>Signal-transducing adaptor protein 2</fullName>
        <shortName>STAP-2</shortName>
    </recommendedName>
    <alternativeName>
        <fullName>Breast tumor kinase substrate</fullName>
        <shortName>BRK substrate</shortName>
    </alternativeName>
</protein>
<name>STAP2_HUMAN</name>
<sequence>MASALRPPRVPKPKGVLPSHYYESFLEKKGPCDRDYKKFWAGLQGLTIYFYNSNRDFQHVEKLNLGAFEKLTDEIPWGSSRDPGTHFSLILRDQEIKFKVETLECREMWKGFILTVVELRVPTDLTLLPGHLYMMSEVLAKEEARRALETPSCFLKVSRLEAQLLLERYPECGNLLLRPSGDGADGVSVTTRQMHNGTHVVRHYKVKREGPKYVIDVEQPFSCTSLDAVVNYFVSHTKKALVPFLLDEDYEKVLGYVEADKENGENVWVAPSAPGPGPAPCTGGPKPLSPASSQDKLPPLPPLPNQEENYVTPIGDGPAVDYENQDVASSSWPVILKPKKLPKPPAKLPKPPVGPKPEPKVFNGGLGRKLPVSSAQPLFPTAGLADMTAELQKKLEKRRALEH</sequence>
<reference key="1">
    <citation type="journal article" date="2000" name="Oncogene">
        <title>A novel adaptor-like protein which is a substrate for the non-receptor tyrosine kinase, BRK.</title>
        <authorList>
            <person name="Mitchell P.J."/>
            <person name="Sara E.A."/>
            <person name="Crompton M.R."/>
        </authorList>
    </citation>
    <scope>NUCLEOTIDE SEQUENCE [MRNA] (ISOFORM 1)</scope>
    <scope>FUNCTION</scope>
    <scope>INTERACTION WITH PTK6</scope>
    <scope>SUBCELLULAR LOCATION</scope>
    <scope>TISSUE SPECIFICITY</scope>
    <scope>VARIANT ASN-93</scope>
    <source>
        <tissue>Mammary gland</tissue>
    </source>
</reference>
<reference key="2">
    <citation type="journal article" date="2004" name="Nat. Genet.">
        <title>Complete sequencing and characterization of 21,243 full-length human cDNAs.</title>
        <authorList>
            <person name="Ota T."/>
            <person name="Suzuki Y."/>
            <person name="Nishikawa T."/>
            <person name="Otsuki T."/>
            <person name="Sugiyama T."/>
            <person name="Irie R."/>
            <person name="Wakamatsu A."/>
            <person name="Hayashi K."/>
            <person name="Sato H."/>
            <person name="Nagai K."/>
            <person name="Kimura K."/>
            <person name="Makita H."/>
            <person name="Sekine M."/>
            <person name="Obayashi M."/>
            <person name="Nishi T."/>
            <person name="Shibahara T."/>
            <person name="Tanaka T."/>
            <person name="Ishii S."/>
            <person name="Yamamoto J."/>
            <person name="Saito K."/>
            <person name="Kawai Y."/>
            <person name="Isono Y."/>
            <person name="Nakamura Y."/>
            <person name="Nagahari K."/>
            <person name="Murakami K."/>
            <person name="Yasuda T."/>
            <person name="Iwayanagi T."/>
            <person name="Wagatsuma M."/>
            <person name="Shiratori A."/>
            <person name="Sudo H."/>
            <person name="Hosoiri T."/>
            <person name="Kaku Y."/>
            <person name="Kodaira H."/>
            <person name="Kondo H."/>
            <person name="Sugawara M."/>
            <person name="Takahashi M."/>
            <person name="Kanda K."/>
            <person name="Yokoi T."/>
            <person name="Furuya T."/>
            <person name="Kikkawa E."/>
            <person name="Omura Y."/>
            <person name="Abe K."/>
            <person name="Kamihara K."/>
            <person name="Katsuta N."/>
            <person name="Sato K."/>
            <person name="Tanikawa M."/>
            <person name="Yamazaki M."/>
            <person name="Ninomiya K."/>
            <person name="Ishibashi T."/>
            <person name="Yamashita H."/>
            <person name="Murakawa K."/>
            <person name="Fujimori K."/>
            <person name="Tanai H."/>
            <person name="Kimata M."/>
            <person name="Watanabe M."/>
            <person name="Hiraoka S."/>
            <person name="Chiba Y."/>
            <person name="Ishida S."/>
            <person name="Ono Y."/>
            <person name="Takiguchi S."/>
            <person name="Watanabe S."/>
            <person name="Yosida M."/>
            <person name="Hotuta T."/>
            <person name="Kusano J."/>
            <person name="Kanehori K."/>
            <person name="Takahashi-Fujii A."/>
            <person name="Hara H."/>
            <person name="Tanase T.-O."/>
            <person name="Nomura Y."/>
            <person name="Togiya S."/>
            <person name="Komai F."/>
            <person name="Hara R."/>
            <person name="Takeuchi K."/>
            <person name="Arita M."/>
            <person name="Imose N."/>
            <person name="Musashino K."/>
            <person name="Yuuki H."/>
            <person name="Oshima A."/>
            <person name="Sasaki N."/>
            <person name="Aotsuka S."/>
            <person name="Yoshikawa Y."/>
            <person name="Matsunawa H."/>
            <person name="Ichihara T."/>
            <person name="Shiohata N."/>
            <person name="Sano S."/>
            <person name="Moriya S."/>
            <person name="Momiyama H."/>
            <person name="Satoh N."/>
            <person name="Takami S."/>
            <person name="Terashima Y."/>
            <person name="Suzuki O."/>
            <person name="Nakagawa S."/>
            <person name="Senoh A."/>
            <person name="Mizoguchi H."/>
            <person name="Goto Y."/>
            <person name="Shimizu F."/>
            <person name="Wakebe H."/>
            <person name="Hishigaki H."/>
            <person name="Watanabe T."/>
            <person name="Sugiyama A."/>
            <person name="Takemoto M."/>
            <person name="Kawakami B."/>
            <person name="Yamazaki M."/>
            <person name="Watanabe K."/>
            <person name="Kumagai A."/>
            <person name="Itakura S."/>
            <person name="Fukuzumi Y."/>
            <person name="Fujimori Y."/>
            <person name="Komiyama M."/>
            <person name="Tashiro H."/>
            <person name="Tanigami A."/>
            <person name="Fujiwara T."/>
            <person name="Ono T."/>
            <person name="Yamada K."/>
            <person name="Fujii Y."/>
            <person name="Ozaki K."/>
            <person name="Hirao M."/>
            <person name="Ohmori Y."/>
            <person name="Kawabata A."/>
            <person name="Hikiji T."/>
            <person name="Kobatake N."/>
            <person name="Inagaki H."/>
            <person name="Ikema Y."/>
            <person name="Okamoto S."/>
            <person name="Okitani R."/>
            <person name="Kawakami T."/>
            <person name="Noguchi S."/>
            <person name="Itoh T."/>
            <person name="Shigeta K."/>
            <person name="Senba T."/>
            <person name="Matsumura K."/>
            <person name="Nakajima Y."/>
            <person name="Mizuno T."/>
            <person name="Morinaga M."/>
            <person name="Sasaki M."/>
            <person name="Togashi T."/>
            <person name="Oyama M."/>
            <person name="Hata H."/>
            <person name="Watanabe M."/>
            <person name="Komatsu T."/>
            <person name="Mizushima-Sugano J."/>
            <person name="Satoh T."/>
            <person name="Shirai Y."/>
            <person name="Takahashi Y."/>
            <person name="Nakagawa K."/>
            <person name="Okumura K."/>
            <person name="Nagase T."/>
            <person name="Nomura N."/>
            <person name="Kikuchi H."/>
            <person name="Masuho Y."/>
            <person name="Yamashita R."/>
            <person name="Nakai K."/>
            <person name="Yada T."/>
            <person name="Nakamura Y."/>
            <person name="Ohara O."/>
            <person name="Isogai T."/>
            <person name="Sugano S."/>
        </authorList>
    </citation>
    <scope>NUCLEOTIDE SEQUENCE [LARGE SCALE MRNA] (ISOFORM 2)</scope>
    <scope>VARIANT ASN-93</scope>
    <source>
        <tissue>Colon mucosa</tissue>
    </source>
</reference>
<reference key="3">
    <citation type="journal article" date="2004" name="Nature">
        <title>The DNA sequence and biology of human chromosome 19.</title>
        <authorList>
            <person name="Grimwood J."/>
            <person name="Gordon L.A."/>
            <person name="Olsen A.S."/>
            <person name="Terry A."/>
            <person name="Schmutz J."/>
            <person name="Lamerdin J.E."/>
            <person name="Hellsten U."/>
            <person name="Goodstein D."/>
            <person name="Couronne O."/>
            <person name="Tran-Gyamfi M."/>
            <person name="Aerts A."/>
            <person name="Altherr M."/>
            <person name="Ashworth L."/>
            <person name="Bajorek E."/>
            <person name="Black S."/>
            <person name="Branscomb E."/>
            <person name="Caenepeel S."/>
            <person name="Carrano A.V."/>
            <person name="Caoile C."/>
            <person name="Chan Y.M."/>
            <person name="Christensen M."/>
            <person name="Cleland C.A."/>
            <person name="Copeland A."/>
            <person name="Dalin E."/>
            <person name="Dehal P."/>
            <person name="Denys M."/>
            <person name="Detter J.C."/>
            <person name="Escobar J."/>
            <person name="Flowers D."/>
            <person name="Fotopulos D."/>
            <person name="Garcia C."/>
            <person name="Georgescu A.M."/>
            <person name="Glavina T."/>
            <person name="Gomez M."/>
            <person name="Gonzales E."/>
            <person name="Groza M."/>
            <person name="Hammon N."/>
            <person name="Hawkins T."/>
            <person name="Haydu L."/>
            <person name="Ho I."/>
            <person name="Huang W."/>
            <person name="Israni S."/>
            <person name="Jett J."/>
            <person name="Kadner K."/>
            <person name="Kimball H."/>
            <person name="Kobayashi A."/>
            <person name="Larionov V."/>
            <person name="Leem S.-H."/>
            <person name="Lopez F."/>
            <person name="Lou Y."/>
            <person name="Lowry S."/>
            <person name="Malfatti S."/>
            <person name="Martinez D."/>
            <person name="McCready P.M."/>
            <person name="Medina C."/>
            <person name="Morgan J."/>
            <person name="Nelson K."/>
            <person name="Nolan M."/>
            <person name="Ovcharenko I."/>
            <person name="Pitluck S."/>
            <person name="Pollard M."/>
            <person name="Popkie A.P."/>
            <person name="Predki P."/>
            <person name="Quan G."/>
            <person name="Ramirez L."/>
            <person name="Rash S."/>
            <person name="Retterer J."/>
            <person name="Rodriguez A."/>
            <person name="Rogers S."/>
            <person name="Salamov A."/>
            <person name="Salazar A."/>
            <person name="She X."/>
            <person name="Smith D."/>
            <person name="Slezak T."/>
            <person name="Solovyev V."/>
            <person name="Thayer N."/>
            <person name="Tice H."/>
            <person name="Tsai M."/>
            <person name="Ustaszewska A."/>
            <person name="Vo N."/>
            <person name="Wagner M."/>
            <person name="Wheeler J."/>
            <person name="Wu K."/>
            <person name="Xie G."/>
            <person name="Yang J."/>
            <person name="Dubchak I."/>
            <person name="Furey T.S."/>
            <person name="DeJong P."/>
            <person name="Dickson M."/>
            <person name="Gordon D."/>
            <person name="Eichler E.E."/>
            <person name="Pennacchio L.A."/>
            <person name="Richardson P."/>
            <person name="Stubbs L."/>
            <person name="Rokhsar D.S."/>
            <person name="Myers R.M."/>
            <person name="Rubin E.M."/>
            <person name="Lucas S.M."/>
        </authorList>
    </citation>
    <scope>NUCLEOTIDE SEQUENCE [LARGE SCALE GENOMIC DNA]</scope>
</reference>
<reference key="4">
    <citation type="journal article" date="2004" name="Genome Res.">
        <title>The status, quality, and expansion of the NIH full-length cDNA project: the Mammalian Gene Collection (MGC).</title>
        <authorList>
            <consortium name="The MGC Project Team"/>
        </authorList>
    </citation>
    <scope>NUCLEOTIDE SEQUENCE [LARGE SCALE MRNA] (ISOFORM 1)</scope>
    <scope>VARIANT ASN-93</scope>
    <source>
        <tissue>Placenta</tissue>
    </source>
</reference>
<reference key="5">
    <citation type="journal article" date="2003" name="J. Biol. Chem.">
        <title>STAP-2/BKS, an adaptor/docking protein, modulates STAT3 activation in acute-phase response through its YXXQ motif.</title>
        <authorList>
            <person name="Minoguchi M."/>
            <person name="Minoguchi S."/>
            <person name="Aki D."/>
            <person name="Joo A."/>
            <person name="Yamamoto T."/>
            <person name="Yumioka T."/>
            <person name="Matsuda T."/>
            <person name="Yoshimura A."/>
        </authorList>
    </citation>
    <scope>TISSUE SPECIFICITY</scope>
    <scope>PHOSPHORYLATION AT TYR-22; TYR-250; TYR-310 AND TYR-322</scope>
    <scope>MUTAGENESIS OF TYR-22; TYR-250; TYR-310 AND TYR-322</scope>
</reference>
<reference key="6">
    <citation type="journal article" date="2009" name="Biochem. Biophys. Res. Commun.">
        <title>STAP-2 is phosphorylated at tyrosine-250 by Brk and modulates Brk-mediated STAT3 activation.</title>
        <authorList>
            <person name="Ikeda O."/>
            <person name="Miyasaka Y."/>
            <person name="Sekine Y."/>
            <person name="Mizushima A."/>
            <person name="Muromoto R."/>
            <person name="Nanbo A."/>
            <person name="Yoshimura A."/>
            <person name="Matsuda T."/>
        </authorList>
    </citation>
    <scope>PHOSPHORYLATION AT TYR-250 BY PTK6</scope>
    <scope>INTERACTION WITH PTK6</scope>
</reference>
<reference key="7">
    <citation type="submission" date="2007-10" db="PDB data bank">
        <title>Solution structure of the human STAP2 SH2 domain.</title>
        <authorList>
            <consortium name="RIKEN structural genomics initiative (RSGI)"/>
        </authorList>
    </citation>
    <scope>STRUCTURE BY NMR OF 137-247</scope>
</reference>
<gene>
    <name type="primary">STAP2</name>
    <name type="synonym">BKS</name>
</gene>
<evidence type="ECO:0000255" key="1"/>
<evidence type="ECO:0000255" key="2">
    <source>
        <dbReference type="PROSITE-ProRule" id="PRU00191"/>
    </source>
</evidence>
<evidence type="ECO:0000256" key="3">
    <source>
        <dbReference type="SAM" id="MobiDB-lite"/>
    </source>
</evidence>
<evidence type="ECO:0000269" key="4">
    <source>
    </source>
</evidence>
<evidence type="ECO:0000269" key="5">
    <source>
    </source>
</evidence>
<evidence type="ECO:0000269" key="6">
    <source>
    </source>
</evidence>
<evidence type="ECO:0000269" key="7">
    <source>
    </source>
</evidence>
<evidence type="ECO:0000269" key="8">
    <source>
    </source>
</evidence>
<evidence type="ECO:0000303" key="9">
    <source>
    </source>
</evidence>
<evidence type="ECO:0000305" key="10"/>
<evidence type="ECO:0000305" key="11">
    <source>
    </source>
</evidence>
<evidence type="ECO:0007829" key="12">
    <source>
        <dbReference type="PDB" id="2EL8"/>
    </source>
</evidence>
<keyword id="KW-0002">3D-structure</keyword>
<keyword id="KW-0025">Alternative splicing</keyword>
<keyword id="KW-0175">Coiled coil</keyword>
<keyword id="KW-0963">Cytoplasm</keyword>
<keyword id="KW-0597">Phosphoprotein</keyword>
<keyword id="KW-1267">Proteomics identification</keyword>
<keyword id="KW-1185">Reference proteome</keyword>
<keyword id="KW-0727">SH2 domain</keyword>
<dbReference type="EMBL" id="AJ245719">
    <property type="protein sequence ID" value="CAB65105.1"/>
    <property type="molecule type" value="mRNA"/>
</dbReference>
<dbReference type="EMBL" id="AK000241">
    <property type="protein sequence ID" value="BAA91028.1"/>
    <property type="molecule type" value="mRNA"/>
</dbReference>
<dbReference type="EMBL" id="AC008616">
    <property type="status" value="NOT_ANNOTATED_CDS"/>
    <property type="molecule type" value="Genomic_DNA"/>
</dbReference>
<dbReference type="EMBL" id="BC000795">
    <property type="protein sequence ID" value="AAH00795.1"/>
    <property type="molecule type" value="mRNA"/>
</dbReference>
<dbReference type="CCDS" id="CCDS12128.1">
    <molecule id="Q9UGK3-2"/>
</dbReference>
<dbReference type="CCDS" id="CCDS45926.1">
    <molecule id="Q9UGK3-1"/>
</dbReference>
<dbReference type="RefSeq" id="NP_001013863.1">
    <molecule id="Q9UGK3-1"/>
    <property type="nucleotide sequence ID" value="NM_001013841.2"/>
</dbReference>
<dbReference type="RefSeq" id="NP_060190.2">
    <molecule id="Q9UGK3-2"/>
    <property type="nucleotide sequence ID" value="NM_017720.3"/>
</dbReference>
<dbReference type="PDB" id="2EL8">
    <property type="method" value="NMR"/>
    <property type="chains" value="A=137-247"/>
</dbReference>
<dbReference type="PDBsum" id="2EL8"/>
<dbReference type="SMR" id="Q9UGK3"/>
<dbReference type="BioGRID" id="120759">
    <property type="interactions" value="22"/>
</dbReference>
<dbReference type="FunCoup" id="Q9UGK3">
    <property type="interactions" value="404"/>
</dbReference>
<dbReference type="IntAct" id="Q9UGK3">
    <property type="interactions" value="97"/>
</dbReference>
<dbReference type="MINT" id="Q9UGK3"/>
<dbReference type="STRING" id="9606.ENSP00000468927"/>
<dbReference type="GlyGen" id="Q9UGK3">
    <property type="glycosylation" value="2 sites, 1 O-linked glycan (2 sites)"/>
</dbReference>
<dbReference type="iPTMnet" id="Q9UGK3"/>
<dbReference type="PhosphoSitePlus" id="Q9UGK3"/>
<dbReference type="BioMuta" id="STAP2"/>
<dbReference type="DMDM" id="229462752"/>
<dbReference type="jPOST" id="Q9UGK3"/>
<dbReference type="MassIVE" id="Q9UGK3"/>
<dbReference type="PeptideAtlas" id="Q9UGK3"/>
<dbReference type="ProteomicsDB" id="84227">
    <molecule id="Q9UGK3-1"/>
</dbReference>
<dbReference type="ProteomicsDB" id="84228">
    <molecule id="Q9UGK3-2"/>
</dbReference>
<dbReference type="Antibodypedia" id="1197">
    <property type="antibodies" value="300 antibodies from 34 providers"/>
</dbReference>
<dbReference type="DNASU" id="55620"/>
<dbReference type="Ensembl" id="ENST00000594605.6">
    <molecule id="Q9UGK3-1"/>
    <property type="protein sequence ID" value="ENSP00000471052.1"/>
    <property type="gene ID" value="ENSG00000178078.12"/>
</dbReference>
<dbReference type="Ensembl" id="ENST00000600324.5">
    <molecule id="Q9UGK3-2"/>
    <property type="protein sequence ID" value="ENSP00000468927.1"/>
    <property type="gene ID" value="ENSG00000178078.12"/>
</dbReference>
<dbReference type="GeneID" id="55620"/>
<dbReference type="KEGG" id="hsa:55620"/>
<dbReference type="MANE-Select" id="ENST00000594605.6">
    <property type="protein sequence ID" value="ENSP00000471052.1"/>
    <property type="RefSeq nucleotide sequence ID" value="NM_001013841.2"/>
    <property type="RefSeq protein sequence ID" value="NP_001013863.1"/>
</dbReference>
<dbReference type="UCSC" id="uc060rvu.1">
    <molecule id="Q9UGK3-1"/>
    <property type="organism name" value="human"/>
</dbReference>
<dbReference type="AGR" id="HGNC:30430"/>
<dbReference type="CTD" id="55620"/>
<dbReference type="DisGeNET" id="55620"/>
<dbReference type="GeneCards" id="STAP2"/>
<dbReference type="HGNC" id="HGNC:30430">
    <property type="gene designation" value="STAP2"/>
</dbReference>
<dbReference type="HPA" id="ENSG00000178078">
    <property type="expression patterns" value="Tissue enhanced (esophagus)"/>
</dbReference>
<dbReference type="MIM" id="607881">
    <property type="type" value="gene"/>
</dbReference>
<dbReference type="neXtProt" id="NX_Q9UGK3"/>
<dbReference type="OpenTargets" id="ENSG00000178078"/>
<dbReference type="PharmGKB" id="PA162404971"/>
<dbReference type="VEuPathDB" id="HostDB:ENSG00000178078"/>
<dbReference type="GeneTree" id="ENSGT00530000063841"/>
<dbReference type="HOGENOM" id="CLU_043957_0_0_1"/>
<dbReference type="InParanoid" id="Q9UGK3"/>
<dbReference type="OMA" id="SQLPPCY"/>
<dbReference type="OrthoDB" id="6086001at2759"/>
<dbReference type="PAN-GO" id="Q9UGK3">
    <property type="GO annotations" value="0 GO annotations based on evolutionary models"/>
</dbReference>
<dbReference type="PhylomeDB" id="Q9UGK3"/>
<dbReference type="TreeFam" id="TF332087"/>
<dbReference type="PathwayCommons" id="Q9UGK3"/>
<dbReference type="Reactome" id="R-HSA-8849474">
    <property type="pathway name" value="PTK6 Activates STAT3"/>
</dbReference>
<dbReference type="Reactome" id="R-HSA-9707564">
    <property type="pathway name" value="Cytoprotection by HMOX1"/>
</dbReference>
<dbReference type="SignaLink" id="Q9UGK3"/>
<dbReference type="SIGNOR" id="Q9UGK3"/>
<dbReference type="BioGRID-ORCS" id="55620">
    <property type="hits" value="9 hits in 1155 CRISPR screens"/>
</dbReference>
<dbReference type="ChiTaRS" id="STAP2">
    <property type="organism name" value="human"/>
</dbReference>
<dbReference type="EvolutionaryTrace" id="Q9UGK3"/>
<dbReference type="GeneWiki" id="STAP2"/>
<dbReference type="GenomeRNAi" id="55620"/>
<dbReference type="Pharos" id="Q9UGK3">
    <property type="development level" value="Tbio"/>
</dbReference>
<dbReference type="PRO" id="PR:Q9UGK3"/>
<dbReference type="Proteomes" id="UP000005640">
    <property type="component" value="Chromosome 19"/>
</dbReference>
<dbReference type="RNAct" id="Q9UGK3">
    <property type="molecule type" value="protein"/>
</dbReference>
<dbReference type="Bgee" id="ENSG00000178078">
    <property type="expression patterns" value="Expressed in mucosa of transverse colon and 138 other cell types or tissues"/>
</dbReference>
<dbReference type="ExpressionAtlas" id="Q9UGK3">
    <property type="expression patterns" value="baseline and differential"/>
</dbReference>
<dbReference type="GO" id="GO:0005829">
    <property type="term" value="C:cytosol"/>
    <property type="evidence" value="ECO:0000304"/>
    <property type="project" value="Reactome"/>
</dbReference>
<dbReference type="GO" id="GO:0005886">
    <property type="term" value="C:plasma membrane"/>
    <property type="evidence" value="ECO:0000304"/>
    <property type="project" value="Reactome"/>
</dbReference>
<dbReference type="GO" id="GO:0035591">
    <property type="term" value="F:signaling adaptor activity"/>
    <property type="evidence" value="ECO:0007669"/>
    <property type="project" value="InterPro"/>
</dbReference>
<dbReference type="CDD" id="cd13268">
    <property type="entry name" value="PH_Brdg1"/>
    <property type="match status" value="1"/>
</dbReference>
<dbReference type="CDD" id="cd10404">
    <property type="entry name" value="SH2_STAP2"/>
    <property type="match status" value="1"/>
</dbReference>
<dbReference type="FunFam" id="2.30.29.30:FF:000527">
    <property type="entry name" value="Signal transducing adaptor family member 2"/>
    <property type="match status" value="1"/>
</dbReference>
<dbReference type="FunFam" id="3.30.505.10:FF:000076">
    <property type="entry name" value="Signal transducing adaptor family member 2"/>
    <property type="match status" value="1"/>
</dbReference>
<dbReference type="Gene3D" id="2.30.29.30">
    <property type="entry name" value="Pleckstrin-homology domain (PH domain)/Phosphotyrosine-binding domain (PTB)"/>
    <property type="match status" value="1"/>
</dbReference>
<dbReference type="Gene3D" id="3.30.505.10">
    <property type="entry name" value="SH2 domain"/>
    <property type="match status" value="1"/>
</dbReference>
<dbReference type="InterPro" id="IPR011993">
    <property type="entry name" value="PH-like_dom_sf"/>
</dbReference>
<dbReference type="InterPro" id="IPR000980">
    <property type="entry name" value="SH2"/>
</dbReference>
<dbReference type="InterPro" id="IPR036860">
    <property type="entry name" value="SH2_dom_sf"/>
</dbReference>
<dbReference type="InterPro" id="IPR039111">
    <property type="entry name" value="STAP1/STAP2"/>
</dbReference>
<dbReference type="InterPro" id="IPR035878">
    <property type="entry name" value="STAP2_SH2"/>
</dbReference>
<dbReference type="PANTHER" id="PTHR16186:SF11">
    <property type="entry name" value="SIGNAL-TRANSDUCING ADAPTOR PROTEIN 2"/>
    <property type="match status" value="1"/>
</dbReference>
<dbReference type="PANTHER" id="PTHR16186">
    <property type="entry name" value="SIGNAL-TRANSDUCING ADAPTOR PROTEIN-RELATED"/>
    <property type="match status" value="1"/>
</dbReference>
<dbReference type="SUPFAM" id="SSF50729">
    <property type="entry name" value="PH domain-like"/>
    <property type="match status" value="1"/>
</dbReference>
<dbReference type="SUPFAM" id="SSF55550">
    <property type="entry name" value="SH2 domain"/>
    <property type="match status" value="1"/>
</dbReference>
<dbReference type="PROSITE" id="PS50001">
    <property type="entry name" value="SH2"/>
    <property type="match status" value="1"/>
</dbReference>
<organism>
    <name type="scientific">Homo sapiens</name>
    <name type="common">Human</name>
    <dbReference type="NCBI Taxonomy" id="9606"/>
    <lineage>
        <taxon>Eukaryota</taxon>
        <taxon>Metazoa</taxon>
        <taxon>Chordata</taxon>
        <taxon>Craniata</taxon>
        <taxon>Vertebrata</taxon>
        <taxon>Euteleostomi</taxon>
        <taxon>Mammalia</taxon>
        <taxon>Eutheria</taxon>
        <taxon>Euarchontoglires</taxon>
        <taxon>Primates</taxon>
        <taxon>Haplorrhini</taxon>
        <taxon>Catarrhini</taxon>
        <taxon>Hominidae</taxon>
        <taxon>Homo</taxon>
    </lineage>
</organism>
<comment type="function">
    <text evidence="4">Substrate of protein kinase PTK6. May play a regulatory role in the acute-phase response in systemic inflammation and may modulate STAT3 activity.</text>
</comment>
<comment type="subunit">
    <text evidence="4 8">Interacts with PTK6 and CSF1R.</text>
</comment>
<comment type="interaction">
    <interactant intactId="EBI-1553984">
        <id>Q9UGK3</id>
    </interactant>
    <interactant intactId="EBI-2105445">
        <id>P51451</id>
        <label>BLK</label>
    </interactant>
    <organismsDiffer>false</organismsDiffer>
    <experiments>3</experiments>
</comment>
<comment type="interaction">
    <interactant intactId="EBI-1553984">
        <id>Q9UGK3</id>
    </interactant>
    <interactant intactId="EBI-81266">
        <id>O14920</id>
        <label>IKBKB</label>
    </interactant>
    <organismsDiffer>false</organismsDiffer>
    <experiments>7</experiments>
</comment>
<comment type="interaction">
    <interactant intactId="EBI-1553984">
        <id>Q9UGK3</id>
    </interactant>
    <interactant intactId="EBI-751001">
        <id>Q14145</id>
        <label>KEAP1</label>
    </interactant>
    <organismsDiffer>false</organismsDiffer>
    <experiments>3</experiments>
</comment>
<comment type="interaction">
    <interactant intactId="EBI-1553984">
        <id>Q9UGK3</id>
    </interactant>
    <interactant intactId="EBI-447677">
        <id>Q99836</id>
        <label>MYD88</label>
    </interactant>
    <organismsDiffer>false</organismsDiffer>
    <experiments>3</experiments>
</comment>
<comment type="interaction">
    <interactant intactId="EBI-1553984">
        <id>Q9UGK3</id>
    </interactant>
    <interactant intactId="EBI-10827384">
        <id>Q9ULC6</id>
        <label>PADI1</label>
    </interactant>
    <organismsDiffer>false</organismsDiffer>
    <experiments>2</experiments>
</comment>
<comment type="interaction">
    <interactant intactId="EBI-1553984">
        <id>Q9UGK3</id>
    </interactant>
    <interactant intactId="EBI-7877438">
        <id>P42681</id>
        <label>TXK</label>
    </interactant>
    <organismsDiffer>false</organismsDiffer>
    <experiments>3</experiments>
</comment>
<comment type="interaction">
    <interactant intactId="EBI-1553984">
        <id>Q9UGK3</id>
    </interactant>
    <interactant intactId="EBI-515331">
        <id>P07947</id>
        <label>YES1</label>
    </interactant>
    <organismsDiffer>false</organismsDiffer>
    <experiments>3</experiments>
</comment>
<comment type="subcellular location">
    <subcellularLocation>
        <location evidence="4">Cytoplasm</location>
    </subcellularLocation>
</comment>
<comment type="alternative products">
    <event type="alternative splicing"/>
    <isoform>
        <id>Q9UGK3-1</id>
        <name>1</name>
        <sequence type="displayed"/>
    </isoform>
    <isoform>
        <id>Q9UGK3-2</id>
        <name>2</name>
        <sequence type="described" ref="VSP_041403"/>
    </isoform>
</comment>
<comment type="tissue specificity">
    <text evidence="4 5">Widely expressed.</text>
</comment>
<comment type="PTM">
    <text evidence="5 8">Phosphorylated on tyrosine. Tyr-250 may be important for interaction with kinases. Phosphorylated by PTK6 at Tyr-250 modulates PTK6-mediated STAT3 activation. Tyr-22 and Tyr-322 appears to be phosphorylated by SRC.</text>
</comment>
<comment type="miscellaneous">
    <molecule>Isoform 2</molecule>
    <text evidence="10">Alu insert from position 358 to 403.</text>
</comment>
<proteinExistence type="evidence at protein level"/>
<accession>Q9UGK3</accession>
<accession>A6NKK3</accession>
<accession>Q9NXI2</accession>
<feature type="chain" id="PRO_0000072239" description="Signal-transducing adaptor protein 2">
    <location>
        <begin position="1"/>
        <end position="403"/>
    </location>
</feature>
<feature type="domain" description="PH">
    <location>
        <begin position="18"/>
        <end position="130"/>
    </location>
</feature>
<feature type="domain" description="SH2" evidence="2">
    <location>
        <begin position="133"/>
        <end position="248"/>
    </location>
</feature>
<feature type="region of interest" description="Disordered" evidence="3">
    <location>
        <begin position="270"/>
        <end position="308"/>
    </location>
</feature>
<feature type="region of interest" description="Disordered" evidence="3">
    <location>
        <begin position="331"/>
        <end position="374"/>
    </location>
</feature>
<feature type="coiled-coil region" evidence="1">
    <location>
        <begin position="382"/>
        <end position="402"/>
    </location>
</feature>
<feature type="compositionally biased region" description="Pro residues" evidence="3">
    <location>
        <begin position="343"/>
        <end position="356"/>
    </location>
</feature>
<feature type="modified residue" description="Phosphotyrosine; by SRC" evidence="11">
    <location>
        <position position="22"/>
    </location>
</feature>
<feature type="modified residue" description="Phosphotyrosine; by PTK6" evidence="5 8">
    <location>
        <position position="250"/>
    </location>
</feature>
<feature type="modified residue" description="Phosphotyrosine" evidence="11">
    <location>
        <position position="310"/>
    </location>
</feature>
<feature type="modified residue" description="Phosphotyrosine; by SRC" evidence="11">
    <location>
        <position position="322"/>
    </location>
</feature>
<feature type="splice variant" id="VSP_041403" description="In isoform 2." evidence="9">
    <original>K</original>
    <variation>KPVEKGFHHVAQAGLELLTSSDPPTSASQSAGITGVSHHTWPHLSSL</variation>
    <location>
        <position position="356"/>
    </location>
</feature>
<feature type="sequence variant" id="VAR_055239" description="In dbSNP:rs7247504." evidence="4 6 7">
    <original>D</original>
    <variation>N</variation>
    <location>
        <position position="93"/>
    </location>
</feature>
<feature type="mutagenesis site" description="Small decrease in tyrosine phosphorylation." evidence="5">
    <original>Y</original>
    <variation>F</variation>
    <location>
        <position position="22"/>
    </location>
</feature>
<feature type="mutagenesis site" description="Loss of tyrosine phosphorylation." evidence="5">
    <original>Y</original>
    <variation>F</variation>
    <location>
        <position position="250"/>
    </location>
</feature>
<feature type="mutagenesis site" description="Decrease in tyrosine phosphorylation." evidence="5">
    <original>Y</original>
    <variation>F</variation>
    <location>
        <position position="310"/>
    </location>
</feature>
<feature type="mutagenesis site" description="Decrease in tyrosine phosphorylation." evidence="5">
    <original>Y</original>
    <variation>F</variation>
    <location>
        <position position="322"/>
    </location>
</feature>
<feature type="strand" evidence="12">
    <location>
        <begin position="148"/>
        <end position="150"/>
    </location>
</feature>
<feature type="helix" evidence="12">
    <location>
        <begin position="159"/>
        <end position="168"/>
    </location>
</feature>
<feature type="strand" evidence="12">
    <location>
        <begin position="174"/>
        <end position="179"/>
    </location>
</feature>
<feature type="strand" evidence="12">
    <location>
        <begin position="182"/>
        <end position="191"/>
    </location>
</feature>
<feature type="strand" evidence="12">
    <location>
        <begin position="202"/>
        <end position="204"/>
    </location>
</feature>
<feature type="strand" evidence="12">
    <location>
        <begin position="215"/>
        <end position="219"/>
    </location>
</feature>
<feature type="helix" evidence="12">
    <location>
        <begin position="226"/>
        <end position="236"/>
    </location>
</feature>
<feature type="strand" evidence="12">
    <location>
        <begin position="237"/>
        <end position="239"/>
    </location>
</feature>